<feature type="chain" id="PRO_1000147679" description="UPF0254 protein Mevan_0254">
    <location>
        <begin position="1"/>
        <end position="166"/>
    </location>
</feature>
<accession>A6UNU1</accession>
<sequence length="166" mass="18670">MISVATLECFTHGKIGIKIHKMACGYKELQNDFGYDIIRGNVLVTASMFLPSKESIESLLNMKLPKSDHEFKYSKAYNEENDLKVAEYISKALKEKLKCNIAISTTAGVGKGAISILTDKNSYLFTSDIYGNLIKGENILKRQENAVNKAFEAFIKILNEEYNIKE</sequence>
<proteinExistence type="inferred from homology"/>
<organism>
    <name type="scientific">Methanococcus vannielii (strain ATCC 35089 / DSM 1224 / JCM 13029 / OCM 148 / SB)</name>
    <dbReference type="NCBI Taxonomy" id="406327"/>
    <lineage>
        <taxon>Archaea</taxon>
        <taxon>Methanobacteriati</taxon>
        <taxon>Methanobacteriota</taxon>
        <taxon>Methanomada group</taxon>
        <taxon>Methanococci</taxon>
        <taxon>Methanococcales</taxon>
        <taxon>Methanococcaceae</taxon>
        <taxon>Methanococcus</taxon>
    </lineage>
</organism>
<gene>
    <name type="ordered locus">Mevan_0254</name>
</gene>
<reference key="1">
    <citation type="submission" date="2007-06" db="EMBL/GenBank/DDBJ databases">
        <title>Complete sequence of Methanococcus vannielii SB.</title>
        <authorList>
            <consortium name="US DOE Joint Genome Institute"/>
            <person name="Copeland A."/>
            <person name="Lucas S."/>
            <person name="Lapidus A."/>
            <person name="Barry K."/>
            <person name="Glavina del Rio T."/>
            <person name="Dalin E."/>
            <person name="Tice H."/>
            <person name="Pitluck S."/>
            <person name="Chain P."/>
            <person name="Malfatti S."/>
            <person name="Shin M."/>
            <person name="Vergez L."/>
            <person name="Schmutz J."/>
            <person name="Larimer F."/>
            <person name="Land M."/>
            <person name="Hauser L."/>
            <person name="Kyrpides N."/>
            <person name="Anderson I."/>
            <person name="Sieprawska-Lupa M."/>
            <person name="Whitman W.B."/>
            <person name="Richardson P."/>
        </authorList>
    </citation>
    <scope>NUCLEOTIDE SEQUENCE [LARGE SCALE GENOMIC DNA]</scope>
    <source>
        <strain>ATCC 35089 / DSM 1224 / JCM 13029 / OCM 148 / SB</strain>
    </source>
</reference>
<comment type="similarity">
    <text evidence="1">Belongs to the UPF0254 family.</text>
</comment>
<protein>
    <recommendedName>
        <fullName evidence="1">UPF0254 protein Mevan_0254</fullName>
    </recommendedName>
</protein>
<dbReference type="EMBL" id="CP000742">
    <property type="protein sequence ID" value="ABR54163.1"/>
    <property type="molecule type" value="Genomic_DNA"/>
</dbReference>
<dbReference type="RefSeq" id="WP_011972066.1">
    <property type="nucleotide sequence ID" value="NC_009634.1"/>
</dbReference>
<dbReference type="SMR" id="A6UNU1"/>
<dbReference type="STRING" id="406327.Mevan_0254"/>
<dbReference type="GeneID" id="5324923"/>
<dbReference type="KEGG" id="mvn:Mevan_0254"/>
<dbReference type="eggNOG" id="arCOG04865">
    <property type="taxonomic scope" value="Archaea"/>
</dbReference>
<dbReference type="HOGENOM" id="CLU_1451416_0_0_2"/>
<dbReference type="OrthoDB" id="59686at2157"/>
<dbReference type="Proteomes" id="UP000001107">
    <property type="component" value="Chromosome"/>
</dbReference>
<dbReference type="HAMAP" id="MF_00673">
    <property type="entry name" value="UPF0254"/>
    <property type="match status" value="1"/>
</dbReference>
<dbReference type="InterPro" id="IPR009625">
    <property type="entry name" value="HcgF"/>
</dbReference>
<dbReference type="NCBIfam" id="NF002122">
    <property type="entry name" value="PRK00962.1"/>
    <property type="match status" value="1"/>
</dbReference>
<dbReference type="Pfam" id="PF06787">
    <property type="entry name" value="HcgF"/>
    <property type="match status" value="1"/>
</dbReference>
<evidence type="ECO:0000255" key="1">
    <source>
        <dbReference type="HAMAP-Rule" id="MF_00673"/>
    </source>
</evidence>
<name>Y254_METVS</name>